<evidence type="ECO:0000255" key="1">
    <source>
        <dbReference type="HAMAP-Rule" id="MF_00191"/>
    </source>
</evidence>
<keyword id="KW-0004">4Fe-4S</keyword>
<keyword id="KW-0408">Iron</keyword>
<keyword id="KW-0411">Iron-sulfur</keyword>
<keyword id="KW-0414">Isoprene biosynthesis</keyword>
<keyword id="KW-0479">Metal-binding</keyword>
<keyword id="KW-0560">Oxidoreductase</keyword>
<keyword id="KW-1185">Reference proteome</keyword>
<organism>
    <name type="scientific">Corynebacterium diphtheriae (strain ATCC 700971 / NCTC 13129 / Biotype gravis)</name>
    <dbReference type="NCBI Taxonomy" id="257309"/>
    <lineage>
        <taxon>Bacteria</taxon>
        <taxon>Bacillati</taxon>
        <taxon>Actinomycetota</taxon>
        <taxon>Actinomycetes</taxon>
        <taxon>Mycobacteriales</taxon>
        <taxon>Corynebacteriaceae</taxon>
        <taxon>Corynebacterium</taxon>
    </lineage>
</organism>
<reference key="1">
    <citation type="journal article" date="2003" name="Nucleic Acids Res.">
        <title>The complete genome sequence and analysis of Corynebacterium diphtheriae NCTC13129.</title>
        <authorList>
            <person name="Cerdeno-Tarraga A.-M."/>
            <person name="Efstratiou A."/>
            <person name="Dover L.G."/>
            <person name="Holden M.T.G."/>
            <person name="Pallen M.J."/>
            <person name="Bentley S.D."/>
            <person name="Besra G.S."/>
            <person name="Churcher C.M."/>
            <person name="James K.D."/>
            <person name="De Zoysa A."/>
            <person name="Chillingworth T."/>
            <person name="Cronin A."/>
            <person name="Dowd L."/>
            <person name="Feltwell T."/>
            <person name="Hamlin N."/>
            <person name="Holroyd S."/>
            <person name="Jagels K."/>
            <person name="Moule S."/>
            <person name="Quail M.A."/>
            <person name="Rabbinowitsch E."/>
            <person name="Rutherford K.M."/>
            <person name="Thomson N.R."/>
            <person name="Unwin L."/>
            <person name="Whitehead S."/>
            <person name="Barrell B.G."/>
            <person name="Parkhill J."/>
        </authorList>
    </citation>
    <scope>NUCLEOTIDE SEQUENCE [LARGE SCALE GENOMIC DNA]</scope>
    <source>
        <strain>ATCC 700971 / NCTC 13129 / Biotype gravis</strain>
    </source>
</reference>
<accession>Q6NI36</accession>
<proteinExistence type="inferred from homology"/>
<name>ISPH_CORDI</name>
<feature type="chain" id="PRO_0000128806" description="4-hydroxy-3-methylbut-2-enyl diphosphate reductase">
    <location>
        <begin position="1"/>
        <end position="333"/>
    </location>
</feature>
<feature type="active site" description="Proton donor" evidence="1">
    <location>
        <position position="147"/>
    </location>
</feature>
<feature type="binding site" evidence="1">
    <location>
        <position position="33"/>
    </location>
    <ligand>
        <name>[4Fe-4S] cluster</name>
        <dbReference type="ChEBI" id="CHEBI:49883"/>
    </ligand>
</feature>
<feature type="binding site" evidence="1">
    <location>
        <position position="62"/>
    </location>
    <ligand>
        <name>(2E)-4-hydroxy-3-methylbut-2-enyl diphosphate</name>
        <dbReference type="ChEBI" id="CHEBI:128753"/>
    </ligand>
</feature>
<feature type="binding site" evidence="1">
    <location>
        <position position="62"/>
    </location>
    <ligand>
        <name>dimethylallyl diphosphate</name>
        <dbReference type="ChEBI" id="CHEBI:57623"/>
    </ligand>
</feature>
<feature type="binding site" evidence="1">
    <location>
        <position position="62"/>
    </location>
    <ligand>
        <name>isopentenyl diphosphate</name>
        <dbReference type="ChEBI" id="CHEBI:128769"/>
    </ligand>
</feature>
<feature type="binding site" evidence="1">
    <location>
        <position position="95"/>
    </location>
    <ligand>
        <name>(2E)-4-hydroxy-3-methylbut-2-enyl diphosphate</name>
        <dbReference type="ChEBI" id="CHEBI:128753"/>
    </ligand>
</feature>
<feature type="binding site" evidence="1">
    <location>
        <position position="95"/>
    </location>
    <ligand>
        <name>dimethylallyl diphosphate</name>
        <dbReference type="ChEBI" id="CHEBI:57623"/>
    </ligand>
</feature>
<feature type="binding site" evidence="1">
    <location>
        <position position="95"/>
    </location>
    <ligand>
        <name>isopentenyl diphosphate</name>
        <dbReference type="ChEBI" id="CHEBI:128769"/>
    </ligand>
</feature>
<feature type="binding site" evidence="1">
    <location>
        <position position="117"/>
    </location>
    <ligand>
        <name>[4Fe-4S] cluster</name>
        <dbReference type="ChEBI" id="CHEBI:49883"/>
    </ligand>
</feature>
<feature type="binding site" evidence="1">
    <location>
        <position position="145"/>
    </location>
    <ligand>
        <name>(2E)-4-hydroxy-3-methylbut-2-enyl diphosphate</name>
        <dbReference type="ChEBI" id="CHEBI:128753"/>
    </ligand>
</feature>
<feature type="binding site" evidence="1">
    <location>
        <position position="145"/>
    </location>
    <ligand>
        <name>dimethylallyl diphosphate</name>
        <dbReference type="ChEBI" id="CHEBI:57623"/>
    </ligand>
</feature>
<feature type="binding site" evidence="1">
    <location>
        <position position="145"/>
    </location>
    <ligand>
        <name>isopentenyl diphosphate</name>
        <dbReference type="ChEBI" id="CHEBI:128769"/>
    </ligand>
</feature>
<feature type="binding site" evidence="1">
    <location>
        <position position="186"/>
    </location>
    <ligand>
        <name>(2E)-4-hydroxy-3-methylbut-2-enyl diphosphate</name>
        <dbReference type="ChEBI" id="CHEBI:128753"/>
    </ligand>
</feature>
<feature type="binding site" evidence="1">
    <location>
        <position position="216"/>
    </location>
    <ligand>
        <name>[4Fe-4S] cluster</name>
        <dbReference type="ChEBI" id="CHEBI:49883"/>
    </ligand>
</feature>
<feature type="binding site" evidence="1">
    <location>
        <position position="244"/>
    </location>
    <ligand>
        <name>(2E)-4-hydroxy-3-methylbut-2-enyl diphosphate</name>
        <dbReference type="ChEBI" id="CHEBI:128753"/>
    </ligand>
</feature>
<feature type="binding site" evidence="1">
    <location>
        <position position="244"/>
    </location>
    <ligand>
        <name>dimethylallyl diphosphate</name>
        <dbReference type="ChEBI" id="CHEBI:57623"/>
    </ligand>
</feature>
<feature type="binding site" evidence="1">
    <location>
        <position position="244"/>
    </location>
    <ligand>
        <name>isopentenyl diphosphate</name>
        <dbReference type="ChEBI" id="CHEBI:128769"/>
    </ligand>
</feature>
<feature type="binding site" evidence="1">
    <location>
        <position position="245"/>
    </location>
    <ligand>
        <name>(2E)-4-hydroxy-3-methylbut-2-enyl diphosphate</name>
        <dbReference type="ChEBI" id="CHEBI:128753"/>
    </ligand>
</feature>
<feature type="binding site" evidence="1">
    <location>
        <position position="245"/>
    </location>
    <ligand>
        <name>dimethylallyl diphosphate</name>
        <dbReference type="ChEBI" id="CHEBI:57623"/>
    </ligand>
</feature>
<feature type="binding site" evidence="1">
    <location>
        <position position="245"/>
    </location>
    <ligand>
        <name>isopentenyl diphosphate</name>
        <dbReference type="ChEBI" id="CHEBI:128769"/>
    </ligand>
</feature>
<feature type="binding site" evidence="1">
    <location>
        <position position="246"/>
    </location>
    <ligand>
        <name>(2E)-4-hydroxy-3-methylbut-2-enyl diphosphate</name>
        <dbReference type="ChEBI" id="CHEBI:128753"/>
    </ligand>
</feature>
<feature type="binding site" evidence="1">
    <location>
        <position position="246"/>
    </location>
    <ligand>
        <name>dimethylallyl diphosphate</name>
        <dbReference type="ChEBI" id="CHEBI:57623"/>
    </ligand>
</feature>
<feature type="binding site" evidence="1">
    <location>
        <position position="246"/>
    </location>
    <ligand>
        <name>isopentenyl diphosphate</name>
        <dbReference type="ChEBI" id="CHEBI:128769"/>
    </ligand>
</feature>
<feature type="binding site" evidence="1">
    <location>
        <position position="289"/>
    </location>
    <ligand>
        <name>(2E)-4-hydroxy-3-methylbut-2-enyl diphosphate</name>
        <dbReference type="ChEBI" id="CHEBI:128753"/>
    </ligand>
</feature>
<feature type="binding site" evidence="1">
    <location>
        <position position="289"/>
    </location>
    <ligand>
        <name>dimethylallyl diphosphate</name>
        <dbReference type="ChEBI" id="CHEBI:57623"/>
    </ligand>
</feature>
<feature type="binding site" evidence="1">
    <location>
        <position position="289"/>
    </location>
    <ligand>
        <name>isopentenyl diphosphate</name>
        <dbReference type="ChEBI" id="CHEBI:128769"/>
    </ligand>
</feature>
<dbReference type="EC" id="1.17.7.4" evidence="1"/>
<dbReference type="EMBL" id="BX248356">
    <property type="protein sequence ID" value="CAE49462.1"/>
    <property type="molecule type" value="Genomic_DNA"/>
</dbReference>
<dbReference type="SMR" id="Q6NI36"/>
<dbReference type="STRING" id="257309.DIP0943"/>
<dbReference type="DNASU" id="2649983"/>
<dbReference type="KEGG" id="cdi:DIP0943"/>
<dbReference type="HOGENOM" id="CLU_027486_1_0_11"/>
<dbReference type="UniPathway" id="UPA00056">
    <property type="reaction ID" value="UER00097"/>
</dbReference>
<dbReference type="UniPathway" id="UPA00059">
    <property type="reaction ID" value="UER00105"/>
</dbReference>
<dbReference type="Proteomes" id="UP000002198">
    <property type="component" value="Chromosome"/>
</dbReference>
<dbReference type="GO" id="GO:0051539">
    <property type="term" value="F:4 iron, 4 sulfur cluster binding"/>
    <property type="evidence" value="ECO:0007669"/>
    <property type="project" value="UniProtKB-UniRule"/>
</dbReference>
<dbReference type="GO" id="GO:0051745">
    <property type="term" value="F:4-hydroxy-3-methylbut-2-enyl diphosphate reductase activity"/>
    <property type="evidence" value="ECO:0007669"/>
    <property type="project" value="UniProtKB-UniRule"/>
</dbReference>
<dbReference type="GO" id="GO:0046872">
    <property type="term" value="F:metal ion binding"/>
    <property type="evidence" value="ECO:0007669"/>
    <property type="project" value="UniProtKB-KW"/>
</dbReference>
<dbReference type="GO" id="GO:0050992">
    <property type="term" value="P:dimethylallyl diphosphate biosynthetic process"/>
    <property type="evidence" value="ECO:0007669"/>
    <property type="project" value="UniProtKB-UniRule"/>
</dbReference>
<dbReference type="GO" id="GO:0019288">
    <property type="term" value="P:isopentenyl diphosphate biosynthetic process, methylerythritol 4-phosphate pathway"/>
    <property type="evidence" value="ECO:0007669"/>
    <property type="project" value="UniProtKB-UniRule"/>
</dbReference>
<dbReference type="GO" id="GO:0016114">
    <property type="term" value="P:terpenoid biosynthetic process"/>
    <property type="evidence" value="ECO:0007669"/>
    <property type="project" value="UniProtKB-UniRule"/>
</dbReference>
<dbReference type="CDD" id="cd13944">
    <property type="entry name" value="lytB_ispH"/>
    <property type="match status" value="1"/>
</dbReference>
<dbReference type="Gene3D" id="3.40.50.11270">
    <property type="match status" value="1"/>
</dbReference>
<dbReference type="Gene3D" id="3.40.1010.20">
    <property type="entry name" value="4-hydroxy-3-methylbut-2-enyl diphosphate reductase, catalytic domain"/>
    <property type="match status" value="2"/>
</dbReference>
<dbReference type="HAMAP" id="MF_00191">
    <property type="entry name" value="IspH"/>
    <property type="match status" value="1"/>
</dbReference>
<dbReference type="InterPro" id="IPR003451">
    <property type="entry name" value="LytB/IspH"/>
</dbReference>
<dbReference type="NCBIfam" id="TIGR00216">
    <property type="entry name" value="ispH_lytB"/>
    <property type="match status" value="1"/>
</dbReference>
<dbReference type="NCBIfam" id="NF002189">
    <property type="entry name" value="PRK01045.1-3"/>
    <property type="match status" value="1"/>
</dbReference>
<dbReference type="NCBIfam" id="NF002190">
    <property type="entry name" value="PRK01045.1-4"/>
    <property type="match status" value="1"/>
</dbReference>
<dbReference type="PANTHER" id="PTHR30426">
    <property type="entry name" value="4-HYDROXY-3-METHYLBUT-2-ENYL DIPHOSPHATE REDUCTASE"/>
    <property type="match status" value="1"/>
</dbReference>
<dbReference type="PANTHER" id="PTHR30426:SF0">
    <property type="entry name" value="4-HYDROXY-3-METHYLBUT-2-ENYL DIPHOSPHATE REDUCTASE"/>
    <property type="match status" value="1"/>
</dbReference>
<dbReference type="Pfam" id="PF02401">
    <property type="entry name" value="LYTB"/>
    <property type="match status" value="1"/>
</dbReference>
<protein>
    <recommendedName>
        <fullName evidence="1">4-hydroxy-3-methylbut-2-enyl diphosphate reductase</fullName>
        <shortName evidence="1">HMBPP reductase</shortName>
        <ecNumber evidence="1">1.17.7.4</ecNumber>
    </recommendedName>
</protein>
<sequence>MCMTSPDQLTASESADTASAHKRVLVAAPRGYCAGVDRAVETVEKALEKYGAPVYVRKEIVHNRYVVDTLAERGAIFVDETTEAPEGAHLVFSAHGVSPAVHKEAEALSLKTLDATCPLVTKVHNEVKRFARDGYHILLVGHEGHEEVEGTAGEAPDVTHLVDGVESVDKLPEFLHDEKLIWLSQTTLSVDETMTIVKKLHERFAHLQDPPSDDICYATQNRQVAVKAIAAESDVVIVVGSQNSSNSKRLVEVALQAGAGASYLVDYAHQIDESWLDGATTVGVSSGASVPEILVRGVLEFLDARGFHDVKEITTAAEKITFALPRDLRPART</sequence>
<gene>
    <name evidence="1" type="primary">ispH</name>
    <name type="synonym">lytB</name>
    <name type="ordered locus">DIP0943</name>
</gene>
<comment type="function">
    <text evidence="1">Catalyzes the conversion of 1-hydroxy-2-methyl-2-(E)-butenyl 4-diphosphate (HMBPP) into a mixture of isopentenyl diphosphate (IPP) and dimethylallyl diphosphate (DMAPP). Acts in the terminal step of the DOXP/MEP pathway for isoprenoid precursor biosynthesis.</text>
</comment>
<comment type="catalytic activity">
    <reaction evidence="1">
        <text>isopentenyl diphosphate + 2 oxidized [2Fe-2S]-[ferredoxin] + H2O = (2E)-4-hydroxy-3-methylbut-2-enyl diphosphate + 2 reduced [2Fe-2S]-[ferredoxin] + 2 H(+)</text>
        <dbReference type="Rhea" id="RHEA:24488"/>
        <dbReference type="Rhea" id="RHEA-COMP:10000"/>
        <dbReference type="Rhea" id="RHEA-COMP:10001"/>
        <dbReference type="ChEBI" id="CHEBI:15377"/>
        <dbReference type="ChEBI" id="CHEBI:15378"/>
        <dbReference type="ChEBI" id="CHEBI:33737"/>
        <dbReference type="ChEBI" id="CHEBI:33738"/>
        <dbReference type="ChEBI" id="CHEBI:128753"/>
        <dbReference type="ChEBI" id="CHEBI:128769"/>
        <dbReference type="EC" id="1.17.7.4"/>
    </reaction>
</comment>
<comment type="catalytic activity">
    <reaction evidence="1">
        <text>dimethylallyl diphosphate + 2 oxidized [2Fe-2S]-[ferredoxin] + H2O = (2E)-4-hydroxy-3-methylbut-2-enyl diphosphate + 2 reduced [2Fe-2S]-[ferredoxin] + 2 H(+)</text>
        <dbReference type="Rhea" id="RHEA:24825"/>
        <dbReference type="Rhea" id="RHEA-COMP:10000"/>
        <dbReference type="Rhea" id="RHEA-COMP:10001"/>
        <dbReference type="ChEBI" id="CHEBI:15377"/>
        <dbReference type="ChEBI" id="CHEBI:15378"/>
        <dbReference type="ChEBI" id="CHEBI:33737"/>
        <dbReference type="ChEBI" id="CHEBI:33738"/>
        <dbReference type="ChEBI" id="CHEBI:57623"/>
        <dbReference type="ChEBI" id="CHEBI:128753"/>
        <dbReference type="EC" id="1.17.7.4"/>
    </reaction>
</comment>
<comment type="cofactor">
    <cofactor evidence="1">
        <name>[4Fe-4S] cluster</name>
        <dbReference type="ChEBI" id="CHEBI:49883"/>
    </cofactor>
    <text evidence="1">Binds 1 [4Fe-4S] cluster per subunit.</text>
</comment>
<comment type="pathway">
    <text evidence="1">Isoprenoid biosynthesis; dimethylallyl diphosphate biosynthesis; dimethylallyl diphosphate from (2E)-4-hydroxy-3-methylbutenyl diphosphate: step 1/1.</text>
</comment>
<comment type="pathway">
    <text evidence="1">Isoprenoid biosynthesis; isopentenyl diphosphate biosynthesis via DXP pathway; isopentenyl diphosphate from 1-deoxy-D-xylulose 5-phosphate: step 6/6.</text>
</comment>
<comment type="similarity">
    <text evidence="1">Belongs to the IspH family.</text>
</comment>